<keyword id="KW-1185">Reference proteome</keyword>
<keyword id="KW-0687">Ribonucleoprotein</keyword>
<keyword id="KW-0689">Ribosomal protein</keyword>
<protein>
    <recommendedName>
        <fullName evidence="1">Large ribosomal subunit protein bL19</fullName>
    </recommendedName>
    <alternativeName>
        <fullName evidence="2">50S ribosomal protein L19</fullName>
    </alternativeName>
</protein>
<sequence>MSNIIKQLEQEQLRTDIPAFAQGDTVRVQVRVIEGGKERLQAFEGIVIAKRNRGLHSAFTVRKISNGEGVERVFQTHSPLIASVELKRRGDVRRAKLYYLRNLSGKAARIKEKLN</sequence>
<organism>
    <name type="scientific">Tolumonas auensis (strain DSM 9187 / NBRC 110442 / TA 4)</name>
    <dbReference type="NCBI Taxonomy" id="595494"/>
    <lineage>
        <taxon>Bacteria</taxon>
        <taxon>Pseudomonadati</taxon>
        <taxon>Pseudomonadota</taxon>
        <taxon>Gammaproteobacteria</taxon>
        <taxon>Aeromonadales</taxon>
        <taxon>Aeromonadaceae</taxon>
        <taxon>Tolumonas</taxon>
    </lineage>
</organism>
<accession>C4LD24</accession>
<gene>
    <name evidence="1" type="primary">rplS</name>
    <name type="ordered locus">Tola_2966</name>
</gene>
<feature type="chain" id="PRO_1000205904" description="Large ribosomal subunit protein bL19">
    <location>
        <begin position="1"/>
        <end position="115"/>
    </location>
</feature>
<reference key="1">
    <citation type="submission" date="2009-05" db="EMBL/GenBank/DDBJ databases">
        <title>Complete sequence of Tolumonas auensis DSM 9187.</title>
        <authorList>
            <consortium name="US DOE Joint Genome Institute"/>
            <person name="Lucas S."/>
            <person name="Copeland A."/>
            <person name="Lapidus A."/>
            <person name="Glavina del Rio T."/>
            <person name="Tice H."/>
            <person name="Bruce D."/>
            <person name="Goodwin L."/>
            <person name="Pitluck S."/>
            <person name="Chertkov O."/>
            <person name="Brettin T."/>
            <person name="Detter J.C."/>
            <person name="Han C."/>
            <person name="Larimer F."/>
            <person name="Land M."/>
            <person name="Hauser L."/>
            <person name="Kyrpides N."/>
            <person name="Mikhailova N."/>
            <person name="Spring S."/>
            <person name="Beller H."/>
        </authorList>
    </citation>
    <scope>NUCLEOTIDE SEQUENCE [LARGE SCALE GENOMIC DNA]</scope>
    <source>
        <strain>DSM 9187 / NBRC 110442 / TA 4</strain>
    </source>
</reference>
<proteinExistence type="inferred from homology"/>
<evidence type="ECO:0000255" key="1">
    <source>
        <dbReference type="HAMAP-Rule" id="MF_00402"/>
    </source>
</evidence>
<evidence type="ECO:0000305" key="2"/>
<dbReference type="EMBL" id="CP001616">
    <property type="protein sequence ID" value="ACQ94555.1"/>
    <property type="molecule type" value="Genomic_DNA"/>
</dbReference>
<dbReference type="RefSeq" id="WP_015880004.1">
    <property type="nucleotide sequence ID" value="NC_012691.1"/>
</dbReference>
<dbReference type="SMR" id="C4LD24"/>
<dbReference type="STRING" id="595494.Tola_2966"/>
<dbReference type="KEGG" id="tau:Tola_2966"/>
<dbReference type="eggNOG" id="COG0335">
    <property type="taxonomic scope" value="Bacteria"/>
</dbReference>
<dbReference type="HOGENOM" id="CLU_103507_2_1_6"/>
<dbReference type="OrthoDB" id="9803541at2"/>
<dbReference type="Proteomes" id="UP000009073">
    <property type="component" value="Chromosome"/>
</dbReference>
<dbReference type="GO" id="GO:0022625">
    <property type="term" value="C:cytosolic large ribosomal subunit"/>
    <property type="evidence" value="ECO:0007669"/>
    <property type="project" value="TreeGrafter"/>
</dbReference>
<dbReference type="GO" id="GO:0003735">
    <property type="term" value="F:structural constituent of ribosome"/>
    <property type="evidence" value="ECO:0007669"/>
    <property type="project" value="InterPro"/>
</dbReference>
<dbReference type="GO" id="GO:0006412">
    <property type="term" value="P:translation"/>
    <property type="evidence" value="ECO:0007669"/>
    <property type="project" value="UniProtKB-UniRule"/>
</dbReference>
<dbReference type="FunFam" id="2.30.30.790:FF:000001">
    <property type="entry name" value="50S ribosomal protein L19"/>
    <property type="match status" value="1"/>
</dbReference>
<dbReference type="Gene3D" id="2.30.30.790">
    <property type="match status" value="1"/>
</dbReference>
<dbReference type="HAMAP" id="MF_00402">
    <property type="entry name" value="Ribosomal_bL19"/>
    <property type="match status" value="1"/>
</dbReference>
<dbReference type="InterPro" id="IPR001857">
    <property type="entry name" value="Ribosomal_bL19"/>
</dbReference>
<dbReference type="InterPro" id="IPR018257">
    <property type="entry name" value="Ribosomal_bL19_CS"/>
</dbReference>
<dbReference type="InterPro" id="IPR038657">
    <property type="entry name" value="Ribosomal_bL19_sf"/>
</dbReference>
<dbReference type="InterPro" id="IPR008991">
    <property type="entry name" value="Translation_prot_SH3-like_sf"/>
</dbReference>
<dbReference type="NCBIfam" id="TIGR01024">
    <property type="entry name" value="rplS_bact"/>
    <property type="match status" value="1"/>
</dbReference>
<dbReference type="PANTHER" id="PTHR15680:SF9">
    <property type="entry name" value="LARGE RIBOSOMAL SUBUNIT PROTEIN BL19M"/>
    <property type="match status" value="1"/>
</dbReference>
<dbReference type="PANTHER" id="PTHR15680">
    <property type="entry name" value="RIBOSOMAL PROTEIN L19"/>
    <property type="match status" value="1"/>
</dbReference>
<dbReference type="Pfam" id="PF01245">
    <property type="entry name" value="Ribosomal_L19"/>
    <property type="match status" value="1"/>
</dbReference>
<dbReference type="PIRSF" id="PIRSF002191">
    <property type="entry name" value="Ribosomal_L19"/>
    <property type="match status" value="1"/>
</dbReference>
<dbReference type="PRINTS" id="PR00061">
    <property type="entry name" value="RIBOSOMALL19"/>
</dbReference>
<dbReference type="SUPFAM" id="SSF50104">
    <property type="entry name" value="Translation proteins SH3-like domain"/>
    <property type="match status" value="1"/>
</dbReference>
<dbReference type="PROSITE" id="PS01015">
    <property type="entry name" value="RIBOSOMAL_L19"/>
    <property type="match status" value="1"/>
</dbReference>
<comment type="function">
    <text evidence="1">This protein is located at the 30S-50S ribosomal subunit interface and may play a role in the structure and function of the aminoacyl-tRNA binding site.</text>
</comment>
<comment type="similarity">
    <text evidence="1">Belongs to the bacterial ribosomal protein bL19 family.</text>
</comment>
<name>RL19_TOLAT</name>